<organism>
    <name type="scientific">Bacillus cereus (strain 03BB102)</name>
    <dbReference type="NCBI Taxonomy" id="572264"/>
    <lineage>
        <taxon>Bacteria</taxon>
        <taxon>Bacillati</taxon>
        <taxon>Bacillota</taxon>
        <taxon>Bacilli</taxon>
        <taxon>Bacillales</taxon>
        <taxon>Bacillaceae</taxon>
        <taxon>Bacillus</taxon>
        <taxon>Bacillus cereus group</taxon>
    </lineage>
</organism>
<comment type="function">
    <text evidence="1">Bidirectionally degrades single-stranded DNA into large acid-insoluble oligonucleotides, which are then degraded further into small acid-soluble oligonucleotides.</text>
</comment>
<comment type="catalytic activity">
    <reaction evidence="1">
        <text>Exonucleolytic cleavage in either 5'- to 3'- or 3'- to 5'-direction to yield nucleoside 5'-phosphates.</text>
        <dbReference type="EC" id="3.1.11.6"/>
    </reaction>
</comment>
<comment type="subunit">
    <text evidence="1">Heterooligomer composed of large and small subunits.</text>
</comment>
<comment type="subcellular location">
    <subcellularLocation>
        <location evidence="1">Cytoplasm</location>
    </subcellularLocation>
</comment>
<comment type="similarity">
    <text evidence="1">Belongs to the XseA family.</text>
</comment>
<name>EX7L_BACC3</name>
<protein>
    <recommendedName>
        <fullName evidence="1">Exodeoxyribonuclease 7 large subunit</fullName>
        <ecNumber evidence="1">3.1.11.6</ecNumber>
    </recommendedName>
    <alternativeName>
        <fullName evidence="1">Exodeoxyribonuclease VII large subunit</fullName>
        <shortName evidence="1">Exonuclease VII large subunit</shortName>
    </alternativeName>
</protein>
<sequence length="452" mass="51440">MEKQYLTVTALTRYIKTKIEYDPHLQSVWLKGEISNFKNHSRGHMYFTLKDENARIAAVMFAGHNRNIKFRPENGMKVLVKGKISVYEASGSYQIYIQDMQPDGIGNLHLAYEQLKVRLEEEGLFSQVYKKTIPPYAKTIGVITSPTGAAIRDIITTIKRRYPIGNVIVFPVLVQGESAAPSIVQAIRTANEMEEIDVLIVGRGGGSIEELWAFNEEMVARAIFKSEIPIISAVGHETDFTVADFVADLRAPTPTAAAELAAPNIIELQEKVLQRTLRLQRAMRELVHKKEEKLQVLQKSYAFRYPRQVYEQKEEQLDRALEQLVLAKERYIDKKVNQLKQLSFYLEKHHPSQKIMQTKVAVETLQKQLQREMQTLLQTKEFAFVRAAQKLEALSPLKVMMRGYGLVYDEEKQVLKSVKDVSLGDAVSVQLQDGILDCSVSGIEERELNNGK</sequence>
<dbReference type="EC" id="3.1.11.6" evidence="1"/>
<dbReference type="EMBL" id="CP001407">
    <property type="protein sequence ID" value="ACO27045.1"/>
    <property type="molecule type" value="Genomic_DNA"/>
</dbReference>
<dbReference type="RefSeq" id="WP_000415261.1">
    <property type="nucleotide sequence ID" value="NC_012472.1"/>
</dbReference>
<dbReference type="SMR" id="C1ERQ3"/>
<dbReference type="KEGG" id="bcx:BCA_4289"/>
<dbReference type="PATRIC" id="fig|572264.18.peg.4240"/>
<dbReference type="Proteomes" id="UP000002210">
    <property type="component" value="Chromosome"/>
</dbReference>
<dbReference type="GO" id="GO:0005737">
    <property type="term" value="C:cytoplasm"/>
    <property type="evidence" value="ECO:0007669"/>
    <property type="project" value="UniProtKB-SubCell"/>
</dbReference>
<dbReference type="GO" id="GO:0009318">
    <property type="term" value="C:exodeoxyribonuclease VII complex"/>
    <property type="evidence" value="ECO:0007669"/>
    <property type="project" value="InterPro"/>
</dbReference>
<dbReference type="GO" id="GO:0008855">
    <property type="term" value="F:exodeoxyribonuclease VII activity"/>
    <property type="evidence" value="ECO:0007669"/>
    <property type="project" value="UniProtKB-UniRule"/>
</dbReference>
<dbReference type="GO" id="GO:0003676">
    <property type="term" value="F:nucleic acid binding"/>
    <property type="evidence" value="ECO:0007669"/>
    <property type="project" value="InterPro"/>
</dbReference>
<dbReference type="GO" id="GO:0006308">
    <property type="term" value="P:DNA catabolic process"/>
    <property type="evidence" value="ECO:0007669"/>
    <property type="project" value="UniProtKB-UniRule"/>
</dbReference>
<dbReference type="CDD" id="cd04489">
    <property type="entry name" value="ExoVII_LU_OBF"/>
    <property type="match status" value="1"/>
</dbReference>
<dbReference type="HAMAP" id="MF_00378">
    <property type="entry name" value="Exonuc_7_L"/>
    <property type="match status" value="1"/>
</dbReference>
<dbReference type="InterPro" id="IPR003753">
    <property type="entry name" value="Exonuc_VII_L"/>
</dbReference>
<dbReference type="InterPro" id="IPR020579">
    <property type="entry name" value="Exonuc_VII_lsu_C"/>
</dbReference>
<dbReference type="InterPro" id="IPR025824">
    <property type="entry name" value="OB-fold_nuc-bd_dom"/>
</dbReference>
<dbReference type="NCBIfam" id="TIGR00237">
    <property type="entry name" value="xseA"/>
    <property type="match status" value="1"/>
</dbReference>
<dbReference type="PANTHER" id="PTHR30008">
    <property type="entry name" value="EXODEOXYRIBONUCLEASE 7 LARGE SUBUNIT"/>
    <property type="match status" value="1"/>
</dbReference>
<dbReference type="PANTHER" id="PTHR30008:SF0">
    <property type="entry name" value="EXODEOXYRIBONUCLEASE 7 LARGE SUBUNIT"/>
    <property type="match status" value="1"/>
</dbReference>
<dbReference type="Pfam" id="PF02601">
    <property type="entry name" value="Exonuc_VII_L"/>
    <property type="match status" value="1"/>
</dbReference>
<dbReference type="Pfam" id="PF13742">
    <property type="entry name" value="tRNA_anti_2"/>
    <property type="match status" value="1"/>
</dbReference>
<evidence type="ECO:0000255" key="1">
    <source>
        <dbReference type="HAMAP-Rule" id="MF_00378"/>
    </source>
</evidence>
<keyword id="KW-0963">Cytoplasm</keyword>
<keyword id="KW-0269">Exonuclease</keyword>
<keyword id="KW-0378">Hydrolase</keyword>
<keyword id="KW-0540">Nuclease</keyword>
<proteinExistence type="inferred from homology"/>
<gene>
    <name evidence="1" type="primary">xseA</name>
    <name type="ordered locus">BCA_4289</name>
</gene>
<feature type="chain" id="PRO_1000200659" description="Exodeoxyribonuclease 7 large subunit">
    <location>
        <begin position="1"/>
        <end position="452"/>
    </location>
</feature>
<accession>C1ERQ3</accession>
<reference key="1">
    <citation type="submission" date="2009-02" db="EMBL/GenBank/DDBJ databases">
        <title>Genome sequence of Bacillus cereus 03BB102.</title>
        <authorList>
            <person name="Dodson R.J."/>
            <person name="Jackson P."/>
            <person name="Munk A.C."/>
            <person name="Brettin T."/>
            <person name="Bruce D."/>
            <person name="Detter C."/>
            <person name="Tapia R."/>
            <person name="Han C."/>
            <person name="Sutton G."/>
            <person name="Sims D."/>
        </authorList>
    </citation>
    <scope>NUCLEOTIDE SEQUENCE [LARGE SCALE GENOMIC DNA]</scope>
    <source>
        <strain>03BB102</strain>
    </source>
</reference>